<comment type="function">
    <text evidence="1">Reversibly transfers an adenylyl group from ATP to 4'-phosphopantetheine, yielding dephospho-CoA (dPCoA) and pyrophosphate.</text>
</comment>
<comment type="catalytic activity">
    <reaction evidence="1">
        <text>(R)-4'-phosphopantetheine + ATP + H(+) = 3'-dephospho-CoA + diphosphate</text>
        <dbReference type="Rhea" id="RHEA:19801"/>
        <dbReference type="ChEBI" id="CHEBI:15378"/>
        <dbReference type="ChEBI" id="CHEBI:30616"/>
        <dbReference type="ChEBI" id="CHEBI:33019"/>
        <dbReference type="ChEBI" id="CHEBI:57328"/>
        <dbReference type="ChEBI" id="CHEBI:61723"/>
        <dbReference type="EC" id="2.7.7.3"/>
    </reaction>
</comment>
<comment type="cofactor">
    <cofactor evidence="1">
        <name>Mg(2+)</name>
        <dbReference type="ChEBI" id="CHEBI:18420"/>
    </cofactor>
</comment>
<comment type="pathway">
    <text evidence="1">Cofactor biosynthesis; coenzyme A biosynthesis; CoA from (R)-pantothenate: step 4/5.</text>
</comment>
<comment type="subunit">
    <text evidence="1">Homohexamer.</text>
</comment>
<comment type="subcellular location">
    <subcellularLocation>
        <location evidence="1">Cytoplasm</location>
    </subcellularLocation>
</comment>
<comment type="similarity">
    <text evidence="1">Belongs to the bacterial CoaD family.</text>
</comment>
<proteinExistence type="inferred from homology"/>
<gene>
    <name evidence="1" type="primary">coaD</name>
    <name type="ordered locus">SACOL1134</name>
</gene>
<sequence>MEHTIAVIPGSFDPITYGHLDIIERSTDRFDEIHVCVLKNSKKEGTFSLEERMDLIEQSVKHLPNVKVHQFSGLLVDYCEQVGAKTIIRGLRAVSDFEYELRLTSMNKKLNNEIETLYMMSSTNYSFISSSIVKEVAAYRADISEFVPPYVEKALKKKFK</sequence>
<accession>Q5HGV9</accession>
<dbReference type="EC" id="2.7.7.3" evidence="1"/>
<dbReference type="EMBL" id="CP000046">
    <property type="protein sequence ID" value="AAW38014.1"/>
    <property type="molecule type" value="Genomic_DNA"/>
</dbReference>
<dbReference type="RefSeq" id="WP_000401377.1">
    <property type="nucleotide sequence ID" value="NZ_JBGOFO010000002.1"/>
</dbReference>
<dbReference type="SMR" id="Q5HGV9"/>
<dbReference type="GeneID" id="98345441"/>
<dbReference type="KEGG" id="sac:SACOL1134"/>
<dbReference type="HOGENOM" id="CLU_100149_0_1_9"/>
<dbReference type="UniPathway" id="UPA00241">
    <property type="reaction ID" value="UER00355"/>
</dbReference>
<dbReference type="Proteomes" id="UP000000530">
    <property type="component" value="Chromosome"/>
</dbReference>
<dbReference type="GO" id="GO:0005737">
    <property type="term" value="C:cytoplasm"/>
    <property type="evidence" value="ECO:0007669"/>
    <property type="project" value="UniProtKB-SubCell"/>
</dbReference>
<dbReference type="GO" id="GO:0005524">
    <property type="term" value="F:ATP binding"/>
    <property type="evidence" value="ECO:0007669"/>
    <property type="project" value="UniProtKB-KW"/>
</dbReference>
<dbReference type="GO" id="GO:0004595">
    <property type="term" value="F:pantetheine-phosphate adenylyltransferase activity"/>
    <property type="evidence" value="ECO:0007669"/>
    <property type="project" value="UniProtKB-UniRule"/>
</dbReference>
<dbReference type="GO" id="GO:0015937">
    <property type="term" value="P:coenzyme A biosynthetic process"/>
    <property type="evidence" value="ECO:0007669"/>
    <property type="project" value="UniProtKB-UniRule"/>
</dbReference>
<dbReference type="CDD" id="cd02163">
    <property type="entry name" value="PPAT"/>
    <property type="match status" value="1"/>
</dbReference>
<dbReference type="Gene3D" id="3.40.50.620">
    <property type="entry name" value="HUPs"/>
    <property type="match status" value="1"/>
</dbReference>
<dbReference type="HAMAP" id="MF_00151">
    <property type="entry name" value="PPAT_bact"/>
    <property type="match status" value="1"/>
</dbReference>
<dbReference type="InterPro" id="IPR004821">
    <property type="entry name" value="Cyt_trans-like"/>
</dbReference>
<dbReference type="InterPro" id="IPR001980">
    <property type="entry name" value="PPAT"/>
</dbReference>
<dbReference type="InterPro" id="IPR014729">
    <property type="entry name" value="Rossmann-like_a/b/a_fold"/>
</dbReference>
<dbReference type="NCBIfam" id="TIGR01510">
    <property type="entry name" value="coaD_prev_kdtB"/>
    <property type="match status" value="1"/>
</dbReference>
<dbReference type="NCBIfam" id="TIGR00125">
    <property type="entry name" value="cyt_tran_rel"/>
    <property type="match status" value="1"/>
</dbReference>
<dbReference type="PANTHER" id="PTHR21342">
    <property type="entry name" value="PHOSPHOPANTETHEINE ADENYLYLTRANSFERASE"/>
    <property type="match status" value="1"/>
</dbReference>
<dbReference type="PANTHER" id="PTHR21342:SF1">
    <property type="entry name" value="PHOSPHOPANTETHEINE ADENYLYLTRANSFERASE"/>
    <property type="match status" value="1"/>
</dbReference>
<dbReference type="Pfam" id="PF01467">
    <property type="entry name" value="CTP_transf_like"/>
    <property type="match status" value="1"/>
</dbReference>
<dbReference type="PRINTS" id="PR01020">
    <property type="entry name" value="LPSBIOSNTHSS"/>
</dbReference>
<dbReference type="SUPFAM" id="SSF52374">
    <property type="entry name" value="Nucleotidylyl transferase"/>
    <property type="match status" value="1"/>
</dbReference>
<organism>
    <name type="scientific">Staphylococcus aureus (strain COL)</name>
    <dbReference type="NCBI Taxonomy" id="93062"/>
    <lineage>
        <taxon>Bacteria</taxon>
        <taxon>Bacillati</taxon>
        <taxon>Bacillota</taxon>
        <taxon>Bacilli</taxon>
        <taxon>Bacillales</taxon>
        <taxon>Staphylococcaceae</taxon>
        <taxon>Staphylococcus</taxon>
    </lineage>
</organism>
<name>COAD_STAAC</name>
<feature type="chain" id="PRO_0000156271" description="Phosphopantetheine adenylyltransferase">
    <location>
        <begin position="1"/>
        <end position="160"/>
    </location>
</feature>
<feature type="binding site" evidence="1">
    <location>
        <begin position="11"/>
        <end position="12"/>
    </location>
    <ligand>
        <name>ATP</name>
        <dbReference type="ChEBI" id="CHEBI:30616"/>
    </ligand>
</feature>
<feature type="binding site" evidence="1">
    <location>
        <position position="11"/>
    </location>
    <ligand>
        <name>substrate</name>
    </ligand>
</feature>
<feature type="binding site" evidence="1">
    <location>
        <position position="19"/>
    </location>
    <ligand>
        <name>ATP</name>
        <dbReference type="ChEBI" id="CHEBI:30616"/>
    </ligand>
</feature>
<feature type="binding site" evidence="1">
    <location>
        <position position="43"/>
    </location>
    <ligand>
        <name>substrate</name>
    </ligand>
</feature>
<feature type="binding site" evidence="1">
    <location>
        <position position="75"/>
    </location>
    <ligand>
        <name>substrate</name>
    </ligand>
</feature>
<feature type="binding site" evidence="1">
    <location>
        <position position="89"/>
    </location>
    <ligand>
        <name>substrate</name>
    </ligand>
</feature>
<feature type="binding site" evidence="1">
    <location>
        <begin position="90"/>
        <end position="92"/>
    </location>
    <ligand>
        <name>ATP</name>
        <dbReference type="ChEBI" id="CHEBI:30616"/>
    </ligand>
</feature>
<feature type="binding site" evidence="1">
    <location>
        <position position="100"/>
    </location>
    <ligand>
        <name>ATP</name>
        <dbReference type="ChEBI" id="CHEBI:30616"/>
    </ligand>
</feature>
<feature type="binding site" evidence="1">
    <location>
        <begin position="125"/>
        <end position="131"/>
    </location>
    <ligand>
        <name>ATP</name>
        <dbReference type="ChEBI" id="CHEBI:30616"/>
    </ligand>
</feature>
<feature type="site" description="Transition state stabilizer" evidence="1">
    <location>
        <position position="19"/>
    </location>
</feature>
<reference key="1">
    <citation type="journal article" date="2005" name="J. Bacteriol.">
        <title>Insights on evolution of virulence and resistance from the complete genome analysis of an early methicillin-resistant Staphylococcus aureus strain and a biofilm-producing methicillin-resistant Staphylococcus epidermidis strain.</title>
        <authorList>
            <person name="Gill S.R."/>
            <person name="Fouts D.E."/>
            <person name="Archer G.L."/>
            <person name="Mongodin E.F."/>
            <person name="DeBoy R.T."/>
            <person name="Ravel J."/>
            <person name="Paulsen I.T."/>
            <person name="Kolonay J.F."/>
            <person name="Brinkac L.M."/>
            <person name="Beanan M.J."/>
            <person name="Dodson R.J."/>
            <person name="Daugherty S.C."/>
            <person name="Madupu R."/>
            <person name="Angiuoli S.V."/>
            <person name="Durkin A.S."/>
            <person name="Haft D.H."/>
            <person name="Vamathevan J.J."/>
            <person name="Khouri H."/>
            <person name="Utterback T.R."/>
            <person name="Lee C."/>
            <person name="Dimitrov G."/>
            <person name="Jiang L."/>
            <person name="Qin H."/>
            <person name="Weidman J."/>
            <person name="Tran K."/>
            <person name="Kang K.H."/>
            <person name="Hance I.R."/>
            <person name="Nelson K.E."/>
            <person name="Fraser C.M."/>
        </authorList>
    </citation>
    <scope>NUCLEOTIDE SEQUENCE [LARGE SCALE GENOMIC DNA]</scope>
    <source>
        <strain>COL</strain>
    </source>
</reference>
<keyword id="KW-0067">ATP-binding</keyword>
<keyword id="KW-0173">Coenzyme A biosynthesis</keyword>
<keyword id="KW-0963">Cytoplasm</keyword>
<keyword id="KW-0460">Magnesium</keyword>
<keyword id="KW-0547">Nucleotide-binding</keyword>
<keyword id="KW-0548">Nucleotidyltransferase</keyword>
<keyword id="KW-0808">Transferase</keyword>
<protein>
    <recommendedName>
        <fullName evidence="1">Phosphopantetheine adenylyltransferase</fullName>
        <ecNumber evidence="1">2.7.7.3</ecNumber>
    </recommendedName>
    <alternativeName>
        <fullName evidence="1">Dephospho-CoA pyrophosphorylase</fullName>
    </alternativeName>
    <alternativeName>
        <fullName evidence="1">Pantetheine-phosphate adenylyltransferase</fullName>
        <shortName evidence="1">PPAT</shortName>
    </alternativeName>
</protein>
<evidence type="ECO:0000255" key="1">
    <source>
        <dbReference type="HAMAP-Rule" id="MF_00151"/>
    </source>
</evidence>